<gene>
    <name type="primary">ptdss2</name>
</gene>
<protein>
    <recommendedName>
        <fullName>Phosphatidylserine synthase 2</fullName>
        <shortName>PSS-2</shortName>
        <shortName>PtdSer synthase 2</shortName>
        <ecNumber evidence="1">2.7.8.29</ecNumber>
    </recommendedName>
    <alternativeName>
        <fullName>Serine-exchange enzyme II</fullName>
    </alternativeName>
</protein>
<evidence type="ECO:0000250" key="1">
    <source>
        <dbReference type="UniProtKB" id="Q9Z1X2"/>
    </source>
</evidence>
<evidence type="ECO:0000255" key="2"/>
<evidence type="ECO:0000256" key="3">
    <source>
        <dbReference type="SAM" id="MobiDB-lite"/>
    </source>
</evidence>
<evidence type="ECO:0000305" key="4"/>
<keyword id="KW-0256">Endoplasmic reticulum</keyword>
<keyword id="KW-0444">Lipid biosynthesis</keyword>
<keyword id="KW-0443">Lipid metabolism</keyword>
<keyword id="KW-0472">Membrane</keyword>
<keyword id="KW-0594">Phospholipid biosynthesis</keyword>
<keyword id="KW-1208">Phospholipid metabolism</keyword>
<keyword id="KW-1185">Reference proteome</keyword>
<keyword id="KW-0808">Transferase</keyword>
<keyword id="KW-0812">Transmembrane</keyword>
<keyword id="KW-1133">Transmembrane helix</keyword>
<name>PTSS2_XENTR</name>
<dbReference type="EC" id="2.7.8.29" evidence="1"/>
<dbReference type="EMBL" id="AAMC01058853">
    <property type="status" value="NOT_ANNOTATED_CDS"/>
    <property type="molecule type" value="Genomic_DNA"/>
</dbReference>
<dbReference type="EMBL" id="AAMC01058854">
    <property type="status" value="NOT_ANNOTATED_CDS"/>
    <property type="molecule type" value="Genomic_DNA"/>
</dbReference>
<dbReference type="EMBL" id="BC123999">
    <property type="protein sequence ID" value="AAI24000.1"/>
    <property type="molecule type" value="mRNA"/>
</dbReference>
<dbReference type="RefSeq" id="NP_001072672.1">
    <property type="nucleotide sequence ID" value="NM_001079204.1"/>
</dbReference>
<dbReference type="SMR" id="Q08D11"/>
<dbReference type="FunCoup" id="Q08D11">
    <property type="interactions" value="836"/>
</dbReference>
<dbReference type="STRING" id="8364.ENSXETP00000031629"/>
<dbReference type="PaxDb" id="8364-ENSXETP00000056764"/>
<dbReference type="DNASU" id="780129"/>
<dbReference type="GeneID" id="780129"/>
<dbReference type="KEGG" id="xtr:780129"/>
<dbReference type="AGR" id="Xenbase:XB-GENE-988429"/>
<dbReference type="CTD" id="81490"/>
<dbReference type="Xenbase" id="XB-GENE-988429">
    <property type="gene designation" value="ptdss2"/>
</dbReference>
<dbReference type="eggNOG" id="KOG2735">
    <property type="taxonomic scope" value="Eukaryota"/>
</dbReference>
<dbReference type="HOGENOM" id="CLU_037661_4_1_1"/>
<dbReference type="InParanoid" id="Q08D11"/>
<dbReference type="OrthoDB" id="10265393at2759"/>
<dbReference type="TreeFam" id="TF300012"/>
<dbReference type="Reactome" id="R-XTR-1483101">
    <property type="pathway name" value="Synthesis of PS"/>
</dbReference>
<dbReference type="UniPathway" id="UPA00948"/>
<dbReference type="Proteomes" id="UP000008143">
    <property type="component" value="Chromosome 4"/>
</dbReference>
<dbReference type="Bgee" id="ENSXETG00000027078">
    <property type="expression patterns" value="Expressed in egg cell and 12 other cell types or tissues"/>
</dbReference>
<dbReference type="ExpressionAtlas" id="Q08D11">
    <property type="expression patterns" value="differential"/>
</dbReference>
<dbReference type="GO" id="GO:0005789">
    <property type="term" value="C:endoplasmic reticulum membrane"/>
    <property type="evidence" value="ECO:0007669"/>
    <property type="project" value="UniProtKB-SubCell"/>
</dbReference>
<dbReference type="GO" id="GO:0106245">
    <property type="term" value="F:L-serine-phosphatidylethanolamine phosphatidyltransferase activity"/>
    <property type="evidence" value="ECO:0007669"/>
    <property type="project" value="UniProtKB-EC"/>
</dbReference>
<dbReference type="GO" id="GO:0006659">
    <property type="term" value="P:phosphatidylserine biosynthetic process"/>
    <property type="evidence" value="ECO:0007669"/>
    <property type="project" value="UniProtKB-UniPathway"/>
</dbReference>
<dbReference type="InterPro" id="IPR004277">
    <property type="entry name" value="PSS"/>
</dbReference>
<dbReference type="PANTHER" id="PTHR15362">
    <property type="entry name" value="PHOSPHATIDYLINOSITOL SYNTHASE"/>
    <property type="match status" value="1"/>
</dbReference>
<dbReference type="PANTHER" id="PTHR15362:SF7">
    <property type="entry name" value="PHOSPHATIDYLSERINE SYNTHASE 2"/>
    <property type="match status" value="1"/>
</dbReference>
<dbReference type="Pfam" id="PF03034">
    <property type="entry name" value="PSS"/>
    <property type="match status" value="1"/>
</dbReference>
<feature type="chain" id="PRO_0000416037" description="Phosphatidylserine synthase 2">
    <location>
        <begin position="1"/>
        <end position="474"/>
    </location>
</feature>
<feature type="topological domain" description="Lumenal" evidence="2">
    <location>
        <begin position="1"/>
        <end position="62"/>
    </location>
</feature>
<feature type="transmembrane region" description="Helical" evidence="2">
    <location>
        <begin position="63"/>
        <end position="83"/>
    </location>
</feature>
<feature type="topological domain" description="Cytoplasmic" evidence="2">
    <location>
        <begin position="84"/>
        <end position="96"/>
    </location>
</feature>
<feature type="transmembrane region" description="Helical" evidence="2">
    <location>
        <begin position="97"/>
        <end position="117"/>
    </location>
</feature>
<feature type="topological domain" description="Lumenal" evidence="2">
    <location>
        <begin position="118"/>
        <end position="126"/>
    </location>
</feature>
<feature type="transmembrane region" description="Helical" evidence="2">
    <location>
        <begin position="127"/>
        <end position="147"/>
    </location>
</feature>
<feature type="topological domain" description="Cytoplasmic" evidence="2">
    <location>
        <begin position="148"/>
        <end position="313"/>
    </location>
</feature>
<feature type="transmembrane region" description="Helical" evidence="2">
    <location>
        <begin position="314"/>
        <end position="334"/>
    </location>
</feature>
<feature type="topological domain" description="Lumenal" evidence="2">
    <location>
        <position position="335"/>
    </location>
</feature>
<feature type="transmembrane region" description="Helical" evidence="2">
    <location>
        <begin position="336"/>
        <end position="356"/>
    </location>
</feature>
<feature type="topological domain" description="Cytoplasmic" evidence="2">
    <location>
        <begin position="357"/>
        <end position="376"/>
    </location>
</feature>
<feature type="transmembrane region" description="Helical" evidence="2">
    <location>
        <begin position="377"/>
        <end position="397"/>
    </location>
</feature>
<feature type="topological domain" description="Lumenal" evidence="2">
    <location>
        <begin position="398"/>
        <end position="403"/>
    </location>
</feature>
<feature type="transmembrane region" description="Helical" evidence="2">
    <location>
        <begin position="404"/>
        <end position="424"/>
    </location>
</feature>
<feature type="topological domain" description="Cytoplasmic" evidence="2">
    <location>
        <begin position="425"/>
        <end position="474"/>
    </location>
</feature>
<feature type="region of interest" description="Disordered" evidence="3">
    <location>
        <begin position="448"/>
        <end position="474"/>
    </location>
</feature>
<feature type="compositionally biased region" description="Basic and acidic residues" evidence="3">
    <location>
        <begin position="448"/>
        <end position="468"/>
    </location>
</feature>
<feature type="sequence conflict" description="In Ref. 2; AAI24000." evidence="4" ref="2">
    <original>S</original>
    <variation>R</variation>
    <location>
        <position position="45"/>
    </location>
</feature>
<proteinExistence type="evidence at transcript level"/>
<reference key="1">
    <citation type="journal article" date="2010" name="Science">
        <title>The genome of the Western clawed frog Xenopus tropicalis.</title>
        <authorList>
            <person name="Hellsten U."/>
            <person name="Harland R.M."/>
            <person name="Gilchrist M.J."/>
            <person name="Hendrix D."/>
            <person name="Jurka J."/>
            <person name="Kapitonov V."/>
            <person name="Ovcharenko I."/>
            <person name="Putnam N.H."/>
            <person name="Shu S."/>
            <person name="Taher L."/>
            <person name="Blitz I.L."/>
            <person name="Blumberg B."/>
            <person name="Dichmann D.S."/>
            <person name="Dubchak I."/>
            <person name="Amaya E."/>
            <person name="Detter J.C."/>
            <person name="Fletcher R."/>
            <person name="Gerhard D.S."/>
            <person name="Goodstein D."/>
            <person name="Graves T."/>
            <person name="Grigoriev I.V."/>
            <person name="Grimwood J."/>
            <person name="Kawashima T."/>
            <person name="Lindquist E."/>
            <person name="Lucas S.M."/>
            <person name="Mead P.E."/>
            <person name="Mitros T."/>
            <person name="Ogino H."/>
            <person name="Ohta Y."/>
            <person name="Poliakov A.V."/>
            <person name="Pollet N."/>
            <person name="Robert J."/>
            <person name="Salamov A."/>
            <person name="Sater A.K."/>
            <person name="Schmutz J."/>
            <person name="Terry A."/>
            <person name="Vize P.D."/>
            <person name="Warren W.C."/>
            <person name="Wells D."/>
            <person name="Wills A."/>
            <person name="Wilson R.K."/>
            <person name="Zimmerman L.B."/>
            <person name="Zorn A.M."/>
            <person name="Grainger R."/>
            <person name="Grammer T."/>
            <person name="Khokha M.K."/>
            <person name="Richardson P.M."/>
            <person name="Rokhsar D.S."/>
        </authorList>
    </citation>
    <scope>NUCLEOTIDE SEQUENCE [LARGE SCALE GENOMIC DNA]</scope>
</reference>
<reference key="2">
    <citation type="submission" date="2006-09" db="EMBL/GenBank/DDBJ databases">
        <authorList>
            <consortium name="NIH - Xenopus Gene Collection (XGC) project"/>
        </authorList>
    </citation>
    <scope>NUCLEOTIDE SEQUENCE [LARGE SCALE MRNA]</scope>
    <source>
        <strain>N6</strain>
        <tissue>Spleen</tissue>
    </source>
</reference>
<organism>
    <name type="scientific">Xenopus tropicalis</name>
    <name type="common">Western clawed frog</name>
    <name type="synonym">Silurana tropicalis</name>
    <dbReference type="NCBI Taxonomy" id="8364"/>
    <lineage>
        <taxon>Eukaryota</taxon>
        <taxon>Metazoa</taxon>
        <taxon>Chordata</taxon>
        <taxon>Craniata</taxon>
        <taxon>Vertebrata</taxon>
        <taxon>Euteleostomi</taxon>
        <taxon>Amphibia</taxon>
        <taxon>Batrachia</taxon>
        <taxon>Anura</taxon>
        <taxon>Pipoidea</taxon>
        <taxon>Pipidae</taxon>
        <taxon>Xenopodinae</taxon>
        <taxon>Xenopus</taxon>
        <taxon>Silurana</taxon>
    </lineage>
</organism>
<accession>Q08D11</accession>
<accession>F7D5B0</accession>
<comment type="function">
    <text evidence="1">Catalyzes a base-exchange reaction in which the polar head group of phosphatidylethanolamine (PE) or phosphatidylcholine (PC) is replaced by L-serine (By similarity). Catalyzes the conversion of phosphatatidylethanolamine and does not act on phosphatidylcholine (By similarity). Can utilize both phosphatidylethanolamine (PE) plasmalogen and diacyl PE as substrate and the latter is six times better utilized, indicating the importance of an ester linkage at the sn-1 position (By similarity). Although it shows no sn-1 fatty acyl preference, exhibits significant preference towards docosahexaenoic acid (22:6n-3) compared with 18:1 or 20:4 at the sn-2 position (By similarity).</text>
</comment>
<comment type="catalytic activity">
    <reaction evidence="1">
        <text>a 1,2-diacyl-sn-glycero-3-phosphoethanolamine + L-serine = a 1,2-diacyl-sn-glycero-3-phospho-L-serine + ethanolamine</text>
        <dbReference type="Rhea" id="RHEA:27606"/>
        <dbReference type="ChEBI" id="CHEBI:33384"/>
        <dbReference type="ChEBI" id="CHEBI:57262"/>
        <dbReference type="ChEBI" id="CHEBI:57603"/>
        <dbReference type="ChEBI" id="CHEBI:64612"/>
        <dbReference type="EC" id="2.7.8.29"/>
    </reaction>
    <physiologicalReaction direction="left-to-right" evidence="1">
        <dbReference type="Rhea" id="RHEA:27607"/>
    </physiologicalReaction>
</comment>
<comment type="catalytic activity">
    <reaction evidence="1">
        <text>1-hexadecanoyl-2-(9Z-octadecenoyl)-sn-glycero-3-phosphoethanolamine + L-serine = 1-hexadecanoyl-2-(9Z-octadecenoyl)-sn-glycero-3-phospho-L-serine + ethanolamine</text>
        <dbReference type="Rhea" id="RHEA:41484"/>
        <dbReference type="ChEBI" id="CHEBI:33384"/>
        <dbReference type="ChEBI" id="CHEBI:57603"/>
        <dbReference type="ChEBI" id="CHEBI:73007"/>
        <dbReference type="ChEBI" id="CHEBI:75029"/>
    </reaction>
    <physiologicalReaction direction="left-to-right" evidence="1">
        <dbReference type="Rhea" id="RHEA:41485"/>
    </physiologicalReaction>
</comment>
<comment type="catalytic activity">
    <reaction evidence="1">
        <text>1-hexadecanoyl-2-(4Z,7Z,10Z,13Z,16Z,19Z-docosahexaenoyl)-sn-glycero-3-phosphoethanolamine + L-serine = 1-hexadecanoyl-2-(4Z,7Z,10Z,13Z,16Z,19Z-docosahexaenoyl)-sn-glycero-3-phosphoserine + ethanolamine</text>
        <dbReference type="Rhea" id="RHEA:41488"/>
        <dbReference type="ChEBI" id="CHEBI:33384"/>
        <dbReference type="ChEBI" id="CHEBI:57603"/>
        <dbReference type="ChEBI" id="CHEBI:78261"/>
        <dbReference type="ChEBI" id="CHEBI:78262"/>
    </reaction>
    <physiologicalReaction direction="left-to-right" evidence="1">
        <dbReference type="Rhea" id="RHEA:41489"/>
    </physiologicalReaction>
</comment>
<comment type="catalytic activity">
    <reaction evidence="1">
        <text>1-octadecanoyl-2-(5Z,8Z,11Z,14Z)-eicosatetraenoyl-sn-glycero-3-phosphoethanolamine + L-serine = 1-octadecanoyl-2-(5Z,8Z,11Z,14Z)-eicosatetraenoyl-sn-glycero-3-phosphoserine + ethanolamine</text>
        <dbReference type="Rhea" id="RHEA:41500"/>
        <dbReference type="ChEBI" id="CHEBI:33384"/>
        <dbReference type="ChEBI" id="CHEBI:57603"/>
        <dbReference type="ChEBI" id="CHEBI:78268"/>
        <dbReference type="ChEBI" id="CHEBI:78269"/>
    </reaction>
    <physiologicalReaction direction="left-to-right" evidence="1">
        <dbReference type="Rhea" id="RHEA:41501"/>
    </physiologicalReaction>
</comment>
<comment type="catalytic activity">
    <reaction evidence="1">
        <text>1-octadecanoyl-2-(4Z,7Z,10Z,13Z,16Z,19Z-docosahexaenoyl)-sn-glycero-3-phosphoethanolamine + L-serine = 1-octadecanoyl-2-(4Z,7Z,10Z,13Z,16Z,19Z-docosahexaenoyl)-sn-glycero-3-phosphoserine + ethanolamine</text>
        <dbReference type="Rhea" id="RHEA:41492"/>
        <dbReference type="ChEBI" id="CHEBI:33384"/>
        <dbReference type="ChEBI" id="CHEBI:57603"/>
        <dbReference type="ChEBI" id="CHEBI:78265"/>
        <dbReference type="ChEBI" id="CHEBI:78266"/>
    </reaction>
    <physiologicalReaction direction="left-to-right" evidence="1">
        <dbReference type="Rhea" id="RHEA:41493"/>
    </physiologicalReaction>
</comment>
<comment type="catalytic activity">
    <reaction evidence="1">
        <text>1-(1Z-octadecenyl)-2-(4Z,7Z,10Z,13Z,16Z,19Z-docosahexaenoyl)-sn-glycero-3-phosphoethanolamine + L-serine = 1-(1Z-octadecenyl)-2-(4Z,7Z,10Z,13Z,16Z,19Z-docosahexaenoyl)-sn-glycero-3-phospho-L-serine + ethanolamine</text>
        <dbReference type="Rhea" id="RHEA:41496"/>
        <dbReference type="ChEBI" id="CHEBI:33384"/>
        <dbReference type="ChEBI" id="CHEBI:57603"/>
        <dbReference type="ChEBI" id="CHEBI:78263"/>
        <dbReference type="ChEBI" id="CHEBI:78264"/>
    </reaction>
    <physiologicalReaction direction="left-to-right" evidence="1">
        <dbReference type="Rhea" id="RHEA:41497"/>
    </physiologicalReaction>
</comment>
<comment type="catalytic activity">
    <reaction evidence="1">
        <text>1-octadecanoyl-2-(9Z-octadecenoyl)-sn-glycero-3-phosphoethanolamine + L-serine = 1-octadecanoyl-2-(9Z-octadecenoyl)-sn-glycero-3-phospho-L-serine + ethanolamine</text>
        <dbReference type="Rhea" id="RHEA:40795"/>
        <dbReference type="ChEBI" id="CHEBI:33384"/>
        <dbReference type="ChEBI" id="CHEBI:57603"/>
        <dbReference type="ChEBI" id="CHEBI:75038"/>
        <dbReference type="ChEBI" id="CHEBI:78260"/>
    </reaction>
    <physiologicalReaction direction="left-to-right" evidence="1">
        <dbReference type="Rhea" id="RHEA:40796"/>
    </physiologicalReaction>
</comment>
<comment type="catalytic activity">
    <reaction evidence="1">
        <text>1-(1Z-octadecenyl)-2-(9Z-octadecenoyl)-sn-glycero-3-phosphoethanolamine + L-serine = 1-(1Z-octadecenyl)-2-(9Z-octadecenoyl)-sn-glycero-3-phospho-L-serine + ethanolamine</text>
        <dbReference type="Rhea" id="RHEA:41600"/>
        <dbReference type="ChEBI" id="CHEBI:33384"/>
        <dbReference type="ChEBI" id="CHEBI:57603"/>
        <dbReference type="ChEBI" id="CHEBI:78340"/>
        <dbReference type="ChEBI" id="CHEBI:78341"/>
    </reaction>
    <physiologicalReaction direction="left-to-right" evidence="1">
        <dbReference type="Rhea" id="RHEA:41601"/>
    </physiologicalReaction>
</comment>
<comment type="catalytic activity">
    <reaction evidence="1">
        <text>1-(1Z-octadecenyl)-2-(5Z,8Z,11Z,14Z- eicosatetraenoyl)-sn-glycero-3-phosphoethanolamine + L-serine = 1-(1Z-octadecenyl)-2-(5Z,8Z,11Z,14Z-eicosatetraenoyl)-sn-glycero-3-phospho-L-serine + ethanolamine</text>
        <dbReference type="Rhea" id="RHEA:41604"/>
        <dbReference type="ChEBI" id="CHEBI:33384"/>
        <dbReference type="ChEBI" id="CHEBI:57603"/>
        <dbReference type="ChEBI" id="CHEBI:78342"/>
        <dbReference type="ChEBI" id="CHEBI:78343"/>
    </reaction>
    <physiologicalReaction direction="left-to-right" evidence="1">
        <dbReference type="Rhea" id="RHEA:41605"/>
    </physiologicalReaction>
</comment>
<comment type="pathway">
    <text>Phospholipid metabolism; phosphatidylserine biosynthesis.</text>
</comment>
<comment type="subcellular location">
    <subcellularLocation>
        <location evidence="1">Endoplasmic reticulum membrane</location>
        <topology evidence="2">Multi-pass membrane protein</topology>
    </subcellularLocation>
    <text evidence="1">Highly enriched in the mitochondria-associated membrane (MAM).</text>
</comment>
<comment type="similarity">
    <text evidence="4">Belongs to the phosphatidyl serine synthase family.</text>
</comment>
<sequence>MLRSDVRRVAAGRKASLDGLYCEELEVRGNRNLGNKFSHRGELRSSTESEVFDDGTNTFFWRAHTLTVLFILTCSLGYVTLLEETPQDTAYNAKRGIIASILVFLCFGVTQAKDGPFSRPHPAYWRFWLCVSVVYELFLIFILFQTVHDGRQFMKFIDPKLGVPLPERDYGGNCLIYDPGNKTDPYHNLWDKMDGFVPAHFLGWYIKTLMIRDWWMCMIISVMFEFLEYSLEHQLPNFSECWWDHWIMDVLVCNGFGIYCGMKTLEWLSMKPYKWQGLWNIPTYRGKMKRIAFQFTPYSWVKFEWKPASSLRRWLAVCGIIFVFLLAELNTFYLKFVLWMPPEHYLVLLRLVFFVNVGGVAMREIYDFMDDLKFHKKLGQQAWMVAAITVTEFLIVVKYDPYTITLPLPFYVTQCWILGIVLVLTWTVWRFFIRDITLRYKEIRQQKQHRNEEEKSHRNGDVNSEKDTNKHKKH</sequence>